<gene>
    <name evidence="1 3" type="primary">bpt</name>
    <name type="ordered locus">Atu1159</name>
    <name type="ORF">AGR_C_2146</name>
</gene>
<evidence type="ECO:0000255" key="1">
    <source>
        <dbReference type="HAMAP-Rule" id="MF_00689"/>
    </source>
</evidence>
<evidence type="ECO:0000269" key="2">
    <source>
    </source>
</evidence>
<evidence type="ECO:0000303" key="3">
    <source>
    </source>
</evidence>
<evidence type="ECO:0000305" key="4"/>
<accession>Q8UG81</accession>
<dbReference type="EC" id="2.3.2.29" evidence="1 2"/>
<dbReference type="EMBL" id="AE007869">
    <property type="protein sequence ID" value="AAK86963.2"/>
    <property type="molecule type" value="Genomic_DNA"/>
</dbReference>
<dbReference type="PIR" id="AF2719">
    <property type="entry name" value="AF2719"/>
</dbReference>
<dbReference type="PIR" id="B97501">
    <property type="entry name" value="B97501"/>
</dbReference>
<dbReference type="RefSeq" id="NP_354178.2">
    <property type="nucleotide sequence ID" value="NC_003062.2"/>
</dbReference>
<dbReference type="RefSeq" id="WP_010971439.1">
    <property type="nucleotide sequence ID" value="NC_003062.2"/>
</dbReference>
<dbReference type="SMR" id="Q8UG81"/>
<dbReference type="STRING" id="176299.Atu1159"/>
<dbReference type="EnsemblBacteria" id="AAK86963">
    <property type="protein sequence ID" value="AAK86963"/>
    <property type="gene ID" value="Atu1159"/>
</dbReference>
<dbReference type="GeneID" id="1133197"/>
<dbReference type="KEGG" id="atu:Atu1159"/>
<dbReference type="PATRIC" id="fig|176299.10.peg.1178"/>
<dbReference type="eggNOG" id="COG2935">
    <property type="taxonomic scope" value="Bacteria"/>
</dbReference>
<dbReference type="HOGENOM" id="CLU_077607_1_0_5"/>
<dbReference type="OrthoDB" id="9782022at2"/>
<dbReference type="PhylomeDB" id="Q8UG81"/>
<dbReference type="BioCyc" id="AGRO:ATU1159-MONOMER"/>
<dbReference type="Proteomes" id="UP000000813">
    <property type="component" value="Chromosome circular"/>
</dbReference>
<dbReference type="GO" id="GO:0005737">
    <property type="term" value="C:cytoplasm"/>
    <property type="evidence" value="ECO:0007669"/>
    <property type="project" value="UniProtKB-SubCell"/>
</dbReference>
<dbReference type="GO" id="GO:0004057">
    <property type="term" value="F:arginyl-tRNA--protein transferase activity"/>
    <property type="evidence" value="ECO:0007669"/>
    <property type="project" value="InterPro"/>
</dbReference>
<dbReference type="GO" id="GO:0008914">
    <property type="term" value="F:leucyl-tRNA--protein transferase activity"/>
    <property type="evidence" value="ECO:0007669"/>
    <property type="project" value="UniProtKB-UniRule"/>
</dbReference>
<dbReference type="GO" id="GO:0071596">
    <property type="term" value="P:ubiquitin-dependent protein catabolic process via the N-end rule pathway"/>
    <property type="evidence" value="ECO:0007669"/>
    <property type="project" value="InterPro"/>
</dbReference>
<dbReference type="HAMAP" id="MF_00689">
    <property type="entry name" value="Bpt"/>
    <property type="match status" value="1"/>
</dbReference>
<dbReference type="InterPro" id="IPR016181">
    <property type="entry name" value="Acyl_CoA_acyltransferase"/>
</dbReference>
<dbReference type="InterPro" id="IPR017138">
    <property type="entry name" value="Asp_Glu_LeuTrfase"/>
</dbReference>
<dbReference type="InterPro" id="IPR030700">
    <property type="entry name" value="N-end_Aminoacyl_Trfase"/>
</dbReference>
<dbReference type="InterPro" id="IPR007472">
    <property type="entry name" value="N-end_Aminoacyl_Trfase_C"/>
</dbReference>
<dbReference type="InterPro" id="IPR007471">
    <property type="entry name" value="N-end_Aminoacyl_Trfase_N"/>
</dbReference>
<dbReference type="NCBIfam" id="NF002342">
    <property type="entry name" value="PRK01305.1-3"/>
    <property type="match status" value="1"/>
</dbReference>
<dbReference type="NCBIfam" id="NF002343">
    <property type="entry name" value="PRK01305.1-4"/>
    <property type="match status" value="1"/>
</dbReference>
<dbReference type="NCBIfam" id="NF002346">
    <property type="entry name" value="PRK01305.2-3"/>
    <property type="match status" value="1"/>
</dbReference>
<dbReference type="PANTHER" id="PTHR21367">
    <property type="entry name" value="ARGININE-TRNA-PROTEIN TRANSFERASE 1"/>
    <property type="match status" value="1"/>
</dbReference>
<dbReference type="PANTHER" id="PTHR21367:SF1">
    <property type="entry name" value="ARGINYL-TRNA--PROTEIN TRANSFERASE 1"/>
    <property type="match status" value="1"/>
</dbReference>
<dbReference type="Pfam" id="PF04377">
    <property type="entry name" value="ATE_C"/>
    <property type="match status" value="1"/>
</dbReference>
<dbReference type="Pfam" id="PF04376">
    <property type="entry name" value="ATE_N"/>
    <property type="match status" value="1"/>
</dbReference>
<dbReference type="PIRSF" id="PIRSF037208">
    <property type="entry name" value="ATE_pro_prd"/>
    <property type="match status" value="1"/>
</dbReference>
<dbReference type="SUPFAM" id="SSF55729">
    <property type="entry name" value="Acyl-CoA N-acyltransferases (Nat)"/>
    <property type="match status" value="1"/>
</dbReference>
<proteinExistence type="evidence at protein level"/>
<feature type="chain" id="PRO_0000195094" description="Aspartate/glutamate leucyltransferase">
    <location>
        <begin position="1"/>
        <end position="252"/>
    </location>
</feature>
<keyword id="KW-0012">Acyltransferase</keyword>
<keyword id="KW-0963">Cytoplasm</keyword>
<keyword id="KW-1185">Reference proteome</keyword>
<keyword id="KW-0808">Transferase</keyword>
<reference key="1">
    <citation type="journal article" date="2001" name="Science">
        <title>The genome of the natural genetic engineer Agrobacterium tumefaciens C58.</title>
        <authorList>
            <person name="Wood D.W."/>
            <person name="Setubal J.C."/>
            <person name="Kaul R."/>
            <person name="Monks D.E."/>
            <person name="Kitajima J.P."/>
            <person name="Okura V.K."/>
            <person name="Zhou Y."/>
            <person name="Chen L."/>
            <person name="Wood G.E."/>
            <person name="Almeida N.F. Jr."/>
            <person name="Woo L."/>
            <person name="Chen Y."/>
            <person name="Paulsen I.T."/>
            <person name="Eisen J.A."/>
            <person name="Karp P.D."/>
            <person name="Bovee D. Sr."/>
            <person name="Chapman P."/>
            <person name="Clendenning J."/>
            <person name="Deatherage G."/>
            <person name="Gillet W."/>
            <person name="Grant C."/>
            <person name="Kutyavin T."/>
            <person name="Levy R."/>
            <person name="Li M.-J."/>
            <person name="McClelland E."/>
            <person name="Palmieri A."/>
            <person name="Raymond C."/>
            <person name="Rouse G."/>
            <person name="Saenphimmachak C."/>
            <person name="Wu Z."/>
            <person name="Romero P."/>
            <person name="Gordon D."/>
            <person name="Zhang S."/>
            <person name="Yoo H."/>
            <person name="Tao Y."/>
            <person name="Biddle P."/>
            <person name="Jung M."/>
            <person name="Krespan W."/>
            <person name="Perry M."/>
            <person name="Gordon-Kamm B."/>
            <person name="Liao L."/>
            <person name="Kim S."/>
            <person name="Hendrick C."/>
            <person name="Zhao Z.-Y."/>
            <person name="Dolan M."/>
            <person name="Chumley F."/>
            <person name="Tingey S.V."/>
            <person name="Tomb J.-F."/>
            <person name="Gordon M.P."/>
            <person name="Olson M.V."/>
            <person name="Nester E.W."/>
        </authorList>
    </citation>
    <scope>NUCLEOTIDE SEQUENCE [LARGE SCALE GENOMIC DNA]</scope>
    <source>
        <strain>C58 / ATCC 33970</strain>
    </source>
</reference>
<reference key="2">
    <citation type="journal article" date="2001" name="Science">
        <title>Genome sequence of the plant pathogen and biotechnology agent Agrobacterium tumefaciens C58.</title>
        <authorList>
            <person name="Goodner B."/>
            <person name="Hinkle G."/>
            <person name="Gattung S."/>
            <person name="Miller N."/>
            <person name="Blanchard M."/>
            <person name="Qurollo B."/>
            <person name="Goldman B.S."/>
            <person name="Cao Y."/>
            <person name="Askenazi M."/>
            <person name="Halling C."/>
            <person name="Mullin L."/>
            <person name="Houmiel K."/>
            <person name="Gordon J."/>
            <person name="Vaudin M."/>
            <person name="Iartchouk O."/>
            <person name="Epp A."/>
            <person name="Liu F."/>
            <person name="Wollam C."/>
            <person name="Allinger M."/>
            <person name="Doughty D."/>
            <person name="Scott C."/>
            <person name="Lappas C."/>
            <person name="Markelz B."/>
            <person name="Flanagan C."/>
            <person name="Crowell C."/>
            <person name="Gurson J."/>
            <person name="Lomo C."/>
            <person name="Sear C."/>
            <person name="Strub G."/>
            <person name="Cielo C."/>
            <person name="Slater S."/>
        </authorList>
    </citation>
    <scope>NUCLEOTIDE SEQUENCE [LARGE SCALE GENOMIC DNA]</scope>
    <source>
        <strain>C58 / ATCC 33970</strain>
    </source>
</reference>
<reference key="3">
    <citation type="journal article" date="2006" name="Proc. Natl. Acad. Sci. U.S.A.">
        <title>Aminoacyl-transferases and the N-end rule pathway of prokaryotic/eukaryotic specificity in a human pathogen.</title>
        <authorList>
            <person name="Graciet E."/>
            <person name="Hu R.G."/>
            <person name="Piatkov K."/>
            <person name="Rhee J.H."/>
            <person name="Schwarz E.M."/>
            <person name="Varshavsky A."/>
        </authorList>
    </citation>
    <scope>FUNCTION</scope>
    <scope>CATALYTIC ACTIVITY</scope>
</reference>
<organism>
    <name type="scientific">Agrobacterium fabrum (strain C58 / ATCC 33970)</name>
    <name type="common">Agrobacterium tumefaciens (strain C58)</name>
    <dbReference type="NCBI Taxonomy" id="176299"/>
    <lineage>
        <taxon>Bacteria</taxon>
        <taxon>Pseudomonadati</taxon>
        <taxon>Pseudomonadota</taxon>
        <taxon>Alphaproteobacteria</taxon>
        <taxon>Hyphomicrobiales</taxon>
        <taxon>Rhizobiaceae</taxon>
        <taxon>Rhizobium/Agrobacterium group</taxon>
        <taxon>Agrobacterium</taxon>
        <taxon>Agrobacterium tumefaciens complex</taxon>
    </lineage>
</organism>
<comment type="function">
    <text evidence="1 2">Functions in the N-end rule pathway of protein degradation where it conjugates Leu from its aminoacyl-tRNA to the N-termini of proteins containing an N-terminal aspartate or glutamate.</text>
</comment>
<comment type="catalytic activity">
    <reaction evidence="1 2">
        <text>N-terminal L-glutamyl-[protein] + L-leucyl-tRNA(Leu) = N-terminal L-leucyl-L-glutamyl-[protein] + tRNA(Leu) + H(+)</text>
        <dbReference type="Rhea" id="RHEA:50412"/>
        <dbReference type="Rhea" id="RHEA-COMP:9613"/>
        <dbReference type="Rhea" id="RHEA-COMP:9622"/>
        <dbReference type="Rhea" id="RHEA-COMP:12664"/>
        <dbReference type="Rhea" id="RHEA-COMP:12668"/>
        <dbReference type="ChEBI" id="CHEBI:15378"/>
        <dbReference type="ChEBI" id="CHEBI:64721"/>
        <dbReference type="ChEBI" id="CHEBI:78442"/>
        <dbReference type="ChEBI" id="CHEBI:78494"/>
        <dbReference type="ChEBI" id="CHEBI:133041"/>
        <dbReference type="EC" id="2.3.2.29"/>
    </reaction>
</comment>
<comment type="catalytic activity">
    <reaction evidence="1">
        <text>N-terminal L-aspartyl-[protein] + L-leucyl-tRNA(Leu) = N-terminal L-leucyl-L-aspartyl-[protein] + tRNA(Leu) + H(+)</text>
        <dbReference type="Rhea" id="RHEA:50420"/>
        <dbReference type="Rhea" id="RHEA-COMP:9613"/>
        <dbReference type="Rhea" id="RHEA-COMP:9622"/>
        <dbReference type="Rhea" id="RHEA-COMP:12669"/>
        <dbReference type="Rhea" id="RHEA-COMP:12674"/>
        <dbReference type="ChEBI" id="CHEBI:15378"/>
        <dbReference type="ChEBI" id="CHEBI:64720"/>
        <dbReference type="ChEBI" id="CHEBI:78442"/>
        <dbReference type="ChEBI" id="CHEBI:78494"/>
        <dbReference type="ChEBI" id="CHEBI:133042"/>
        <dbReference type="EC" id="2.3.2.29"/>
    </reaction>
</comment>
<comment type="subcellular location">
    <subcellularLocation>
        <location evidence="1">Cytoplasm</location>
    </subcellularLocation>
</comment>
<comment type="similarity">
    <text evidence="1 4">Belongs to the R-transferase family. Bpt subfamily.</text>
</comment>
<name>BPT_AGRFC</name>
<sequence>MNTQATPSPQFYLTAPATCPYLPNQMERKVFTHLVGPRAPEMNDLLTQGGFRRSQNIAYRPACETCRACVSVRILTEQFQPTKSMRRVLAANSDVVATVHAAEPSTEQFALFRRYLDHRHQSGGMSDMSALDYAIMVEDTHVNTRIIEYRVREPGSGIDSSKRGELLAVALSDVMSDGLSMVYSFFNPELEKRSLGTFMIIDHITRTRALGLPHVYLGYWVDGSEKMGYKTRYHPQEHLTPRGWEIYSPKEE</sequence>
<protein>
    <recommendedName>
        <fullName evidence="1 4">Aspartate/glutamate leucyltransferase</fullName>
        <ecNumber evidence="1 2">2.3.2.29</ecNumber>
    </recommendedName>
</protein>